<sequence>MPQTLTEKILSRASGKSVAPGDVVEVKVDIAAFHDLTGYHVIEVMEKAGMLKVFDKQKIVIAFDHLAPPPDVRSAEIQTQIRKFVKELKIPNFHDINVGILHQILLEKYANPGYVIVAADSHTTTSGAVGAFAQGLGASDVAAAVITGKTWVMVPQSFKIMLEGKPGKWINGKDVALKILGDFKADYFNGMSIEIFVREPSAFPMDFRATVSNMGIEMNADALMFVPDEETVNYIKTNRGYEPNIVRPDEGAKYVDEYTIDLGKLEPLVAAPHSVDNVKTVNEVEGLDVDQVFIGSCTNGRISDFEIAAKILKGKRVKSRCIAIPASYDLFKKAMELGYIETLVNAGCIVTYGTCGPCLGGHFGVAGPGETIVSTSSRNFKGRMGSNDSKVYLAGPAVAAASALQGKITDPRRFS</sequence>
<evidence type="ECO:0000255" key="1">
    <source>
        <dbReference type="HAMAP-Rule" id="MF_01027"/>
    </source>
</evidence>
<reference key="1">
    <citation type="journal article" date="2001" name="DNA Res.">
        <title>Complete genome sequence of an aerobic thermoacidophilic Crenarchaeon, Sulfolobus tokodaii strain7.</title>
        <authorList>
            <person name="Kawarabayasi Y."/>
            <person name="Hino Y."/>
            <person name="Horikawa H."/>
            <person name="Jin-no K."/>
            <person name="Takahashi M."/>
            <person name="Sekine M."/>
            <person name="Baba S."/>
            <person name="Ankai A."/>
            <person name="Kosugi H."/>
            <person name="Hosoyama A."/>
            <person name="Fukui S."/>
            <person name="Nagai Y."/>
            <person name="Nishijima K."/>
            <person name="Otsuka R."/>
            <person name="Nakazawa H."/>
            <person name="Takamiya M."/>
            <person name="Kato Y."/>
            <person name="Yoshizawa T."/>
            <person name="Tanaka T."/>
            <person name="Kudoh Y."/>
            <person name="Yamazaki J."/>
            <person name="Kushida N."/>
            <person name="Oguchi A."/>
            <person name="Aoki K."/>
            <person name="Masuda S."/>
            <person name="Yanagii M."/>
            <person name="Nishimura M."/>
            <person name="Yamagishi A."/>
            <person name="Oshima T."/>
            <person name="Kikuchi H."/>
        </authorList>
    </citation>
    <scope>NUCLEOTIDE SEQUENCE [LARGE SCALE GENOMIC DNA]</scope>
    <source>
        <strain>DSM 16993 / JCM 10545 / NBRC 100140 / 7</strain>
    </source>
</reference>
<proteinExistence type="inferred from homology"/>
<keyword id="KW-0004">4Fe-4S</keyword>
<keyword id="KW-0028">Amino-acid biosynthesis</keyword>
<keyword id="KW-0100">Branched-chain amino acid biosynthesis</keyword>
<keyword id="KW-0408">Iron</keyword>
<keyword id="KW-0411">Iron-sulfur</keyword>
<keyword id="KW-0432">Leucine biosynthesis</keyword>
<keyword id="KW-0456">Lyase</keyword>
<keyword id="KW-0479">Metal-binding</keyword>
<keyword id="KW-1185">Reference proteome</keyword>
<feature type="chain" id="PRO_0000076886" description="3-isopropylmalate dehydratase large subunit">
    <location>
        <begin position="1"/>
        <end position="415"/>
    </location>
</feature>
<feature type="binding site" evidence="1">
    <location>
        <position position="297"/>
    </location>
    <ligand>
        <name>[4Fe-4S] cluster</name>
        <dbReference type="ChEBI" id="CHEBI:49883"/>
    </ligand>
</feature>
<feature type="binding site" evidence="1">
    <location>
        <position position="355"/>
    </location>
    <ligand>
        <name>[4Fe-4S] cluster</name>
        <dbReference type="ChEBI" id="CHEBI:49883"/>
    </ligand>
</feature>
<feature type="binding site" evidence="1">
    <location>
        <position position="358"/>
    </location>
    <ligand>
        <name>[4Fe-4S] cluster</name>
        <dbReference type="ChEBI" id="CHEBI:49883"/>
    </ligand>
</feature>
<name>LEUC_SULTO</name>
<accession>Q974R0</accession>
<accession>F9VN50</accession>
<dbReference type="EC" id="4.2.1.33" evidence="1"/>
<dbReference type="EMBL" id="BA000023">
    <property type="protein sequence ID" value="BAK54347.1"/>
    <property type="molecule type" value="Genomic_DNA"/>
</dbReference>
<dbReference type="RefSeq" id="WP_010978580.1">
    <property type="nucleotide sequence ID" value="NC_003106.2"/>
</dbReference>
<dbReference type="SMR" id="Q974R0"/>
<dbReference type="STRING" id="273063.STK_05990"/>
<dbReference type="GeneID" id="1458547"/>
<dbReference type="KEGG" id="sto:STK_05990"/>
<dbReference type="PATRIC" id="fig|273063.9.peg.681"/>
<dbReference type="eggNOG" id="arCOG01698">
    <property type="taxonomic scope" value="Archaea"/>
</dbReference>
<dbReference type="OrthoDB" id="255at2157"/>
<dbReference type="UniPathway" id="UPA00048">
    <property type="reaction ID" value="UER00071"/>
</dbReference>
<dbReference type="Proteomes" id="UP000001015">
    <property type="component" value="Chromosome"/>
</dbReference>
<dbReference type="GO" id="GO:0003861">
    <property type="term" value="F:3-isopropylmalate dehydratase activity"/>
    <property type="evidence" value="ECO:0007669"/>
    <property type="project" value="UniProtKB-UniRule"/>
</dbReference>
<dbReference type="GO" id="GO:0051539">
    <property type="term" value="F:4 iron, 4 sulfur cluster binding"/>
    <property type="evidence" value="ECO:0007669"/>
    <property type="project" value="UniProtKB-KW"/>
</dbReference>
<dbReference type="GO" id="GO:0046872">
    <property type="term" value="F:metal ion binding"/>
    <property type="evidence" value="ECO:0007669"/>
    <property type="project" value="UniProtKB-KW"/>
</dbReference>
<dbReference type="GO" id="GO:0009098">
    <property type="term" value="P:L-leucine biosynthetic process"/>
    <property type="evidence" value="ECO:0007669"/>
    <property type="project" value="UniProtKB-UniRule"/>
</dbReference>
<dbReference type="CDD" id="cd01583">
    <property type="entry name" value="IPMI"/>
    <property type="match status" value="1"/>
</dbReference>
<dbReference type="Gene3D" id="3.30.499.10">
    <property type="entry name" value="Aconitase, domain 3"/>
    <property type="match status" value="2"/>
</dbReference>
<dbReference type="HAMAP" id="MF_01027">
    <property type="entry name" value="LeuC_type2"/>
    <property type="match status" value="1"/>
</dbReference>
<dbReference type="InterPro" id="IPR015931">
    <property type="entry name" value="Acnase/IPM_dHydase_lsu_aba_1/3"/>
</dbReference>
<dbReference type="InterPro" id="IPR001030">
    <property type="entry name" value="Acoase/IPM_deHydtase_lsu_aba"/>
</dbReference>
<dbReference type="InterPro" id="IPR018136">
    <property type="entry name" value="Aconitase_4Fe-4S_BS"/>
</dbReference>
<dbReference type="InterPro" id="IPR036008">
    <property type="entry name" value="Aconitase_4Fe-4S_dom"/>
</dbReference>
<dbReference type="InterPro" id="IPR011826">
    <property type="entry name" value="HAcnase/IPMdehydase_lsu_prok"/>
</dbReference>
<dbReference type="InterPro" id="IPR006251">
    <property type="entry name" value="Homoacnase/IPMdehydase_lsu"/>
</dbReference>
<dbReference type="InterPro" id="IPR050067">
    <property type="entry name" value="IPM_dehydratase_rel_enz"/>
</dbReference>
<dbReference type="InterPro" id="IPR033941">
    <property type="entry name" value="IPMI_cat"/>
</dbReference>
<dbReference type="NCBIfam" id="TIGR01343">
    <property type="entry name" value="hacA_fam"/>
    <property type="match status" value="1"/>
</dbReference>
<dbReference type="NCBIfam" id="TIGR02086">
    <property type="entry name" value="IPMI_arch"/>
    <property type="match status" value="1"/>
</dbReference>
<dbReference type="NCBIfam" id="NF001614">
    <property type="entry name" value="PRK00402.1"/>
    <property type="match status" value="1"/>
</dbReference>
<dbReference type="PANTHER" id="PTHR43822:SF2">
    <property type="entry name" value="HOMOACONITASE, MITOCHONDRIAL"/>
    <property type="match status" value="1"/>
</dbReference>
<dbReference type="PANTHER" id="PTHR43822">
    <property type="entry name" value="HOMOACONITASE, MITOCHONDRIAL-RELATED"/>
    <property type="match status" value="1"/>
</dbReference>
<dbReference type="Pfam" id="PF00330">
    <property type="entry name" value="Aconitase"/>
    <property type="match status" value="1"/>
</dbReference>
<dbReference type="PRINTS" id="PR00415">
    <property type="entry name" value="ACONITASE"/>
</dbReference>
<dbReference type="SUPFAM" id="SSF53732">
    <property type="entry name" value="Aconitase iron-sulfur domain"/>
    <property type="match status" value="1"/>
</dbReference>
<dbReference type="PROSITE" id="PS01244">
    <property type="entry name" value="ACONITASE_2"/>
    <property type="match status" value="1"/>
</dbReference>
<protein>
    <recommendedName>
        <fullName evidence="1">3-isopropylmalate dehydratase large subunit</fullName>
        <ecNumber evidence="1">4.2.1.33</ecNumber>
    </recommendedName>
    <alternativeName>
        <fullName evidence="1">Alpha-IPM isomerase</fullName>
        <shortName evidence="1">IPMI</shortName>
    </alternativeName>
    <alternativeName>
        <fullName evidence="1">Isopropylmalate isomerase</fullName>
    </alternativeName>
</protein>
<comment type="function">
    <text evidence="1">Catalyzes the isomerization between 2-isopropylmalate and 3-isopropylmalate, via the formation of 2-isopropylmaleate.</text>
</comment>
<comment type="catalytic activity">
    <reaction evidence="1">
        <text>(2R,3S)-3-isopropylmalate = (2S)-2-isopropylmalate</text>
        <dbReference type="Rhea" id="RHEA:32287"/>
        <dbReference type="ChEBI" id="CHEBI:1178"/>
        <dbReference type="ChEBI" id="CHEBI:35121"/>
        <dbReference type="EC" id="4.2.1.33"/>
    </reaction>
</comment>
<comment type="cofactor">
    <cofactor evidence="1">
        <name>[4Fe-4S] cluster</name>
        <dbReference type="ChEBI" id="CHEBI:49883"/>
    </cofactor>
    <text evidence="1">Binds 1 [4Fe-4S] cluster per subunit.</text>
</comment>
<comment type="pathway">
    <text evidence="1">Amino-acid biosynthesis; L-leucine biosynthesis; L-leucine from 3-methyl-2-oxobutanoate: step 2/4.</text>
</comment>
<comment type="subunit">
    <text evidence="1">Heterodimer of LeuC and LeuD.</text>
</comment>
<comment type="similarity">
    <text evidence="1">Belongs to the aconitase/IPM isomerase family. LeuC type 2 subfamily.</text>
</comment>
<gene>
    <name evidence="1" type="primary">leuC</name>
    <name type="ordered locus">STK_05990</name>
</gene>
<organism>
    <name type="scientific">Sulfurisphaera tokodaii (strain DSM 16993 / JCM 10545 / NBRC 100140 / 7)</name>
    <name type="common">Sulfolobus tokodaii</name>
    <dbReference type="NCBI Taxonomy" id="273063"/>
    <lineage>
        <taxon>Archaea</taxon>
        <taxon>Thermoproteota</taxon>
        <taxon>Thermoprotei</taxon>
        <taxon>Sulfolobales</taxon>
        <taxon>Sulfolobaceae</taxon>
        <taxon>Sulfurisphaera</taxon>
    </lineage>
</organism>